<organism>
    <name type="scientific">Thermofilum pendens (strain DSM 2475 / Hrk 5)</name>
    <dbReference type="NCBI Taxonomy" id="368408"/>
    <lineage>
        <taxon>Archaea</taxon>
        <taxon>Thermoproteota</taxon>
        <taxon>Thermoprotei</taxon>
        <taxon>Thermofilales</taxon>
        <taxon>Thermofilaceae</taxon>
        <taxon>Thermofilum</taxon>
    </lineage>
</organism>
<proteinExistence type="inferred from homology"/>
<sequence length="175" mass="19952">MSSSPAARRELSYSWGYLFFDEPPLSVEKAWRLVQSSRFGKTLILVGDVVSKSFRERGLGDFFIVDGHTRRNLKVEDLPGKAEAFTCKNRPGEISRECYELLRNLLTSAIGRGKKIVVYVEGEEDLLSLVALLYCPLNDSWVIYGNFRGYLEVIPCTSFFRSVAENLLVKHFEKD</sequence>
<keyword id="KW-0173">Coenzyme A biosynthesis</keyword>
<keyword id="KW-0342">GTP-binding</keyword>
<keyword id="KW-0418">Kinase</keyword>
<keyword id="KW-0547">Nucleotide-binding</keyword>
<keyword id="KW-1185">Reference proteome</keyword>
<keyword id="KW-0808">Transferase</keyword>
<evidence type="ECO:0000255" key="1">
    <source>
        <dbReference type="HAMAP-Rule" id="MF_00590"/>
    </source>
</evidence>
<reference key="1">
    <citation type="journal article" date="2008" name="J. Bacteriol.">
        <title>Genome sequence of Thermofilum pendens reveals an exceptional loss of biosynthetic pathways without genome reduction.</title>
        <authorList>
            <person name="Anderson I."/>
            <person name="Rodriguez J."/>
            <person name="Susanti D."/>
            <person name="Porat I."/>
            <person name="Reich C."/>
            <person name="Ulrich L.E."/>
            <person name="Elkins J.G."/>
            <person name="Mavromatis K."/>
            <person name="Lykidis A."/>
            <person name="Kim E."/>
            <person name="Thompson L.S."/>
            <person name="Nolan M."/>
            <person name="Land M."/>
            <person name="Copeland A."/>
            <person name="Lapidus A."/>
            <person name="Lucas S."/>
            <person name="Detter C."/>
            <person name="Zhulin I.B."/>
            <person name="Olsen G.J."/>
            <person name="Whitman W."/>
            <person name="Mukhopadhyay B."/>
            <person name="Bristow J."/>
            <person name="Kyrpides N."/>
        </authorList>
    </citation>
    <scope>NUCLEOTIDE SEQUENCE [LARGE SCALE GENOMIC DNA]</scope>
    <source>
        <strain>DSM 2475 / Hrk 5</strain>
    </source>
</reference>
<accession>A1RXQ3</accession>
<feature type="chain" id="PRO_0000380068" description="GTP-dependent dephospho-CoA kinase">
    <location>
        <begin position="1"/>
        <end position="175"/>
    </location>
</feature>
<feature type="binding site" evidence="1">
    <location>
        <position position="48"/>
    </location>
    <ligand>
        <name>GTP</name>
        <dbReference type="ChEBI" id="CHEBI:37565"/>
    </ligand>
</feature>
<feature type="binding site" evidence="1">
    <location>
        <position position="49"/>
    </location>
    <ligand>
        <name>GTP</name>
        <dbReference type="ChEBI" id="CHEBI:37565"/>
    </ligand>
</feature>
<feature type="binding site" evidence="1">
    <location>
        <position position="50"/>
    </location>
    <ligand>
        <name>GTP</name>
        <dbReference type="ChEBI" id="CHEBI:37565"/>
    </ligand>
</feature>
<feature type="binding site" evidence="1">
    <location>
        <position position="66"/>
    </location>
    <ligand>
        <name>GTP</name>
        <dbReference type="ChEBI" id="CHEBI:37565"/>
    </ligand>
</feature>
<feature type="binding site" evidence="1">
    <location>
        <position position="124"/>
    </location>
    <ligand>
        <name>GTP</name>
        <dbReference type="ChEBI" id="CHEBI:37565"/>
    </ligand>
</feature>
<gene>
    <name type="ordered locus">Tpen_0578</name>
</gene>
<protein>
    <recommendedName>
        <fullName evidence="1">GTP-dependent dephospho-CoA kinase</fullName>
        <ecNumber evidence="1">2.7.1.237</ecNumber>
    </recommendedName>
    <alternativeName>
        <fullName evidence="1">Dephospho-coenzyme A kinase</fullName>
        <shortName evidence="1">DPCK</shortName>
    </alternativeName>
</protein>
<dbReference type="EC" id="2.7.1.237" evidence="1"/>
<dbReference type="EMBL" id="CP000505">
    <property type="protein sequence ID" value="ABL77983.1"/>
    <property type="molecule type" value="Genomic_DNA"/>
</dbReference>
<dbReference type="RefSeq" id="WP_011752248.1">
    <property type="nucleotide sequence ID" value="NC_008698.1"/>
</dbReference>
<dbReference type="SMR" id="A1RXQ3"/>
<dbReference type="STRING" id="368408.Tpen_0578"/>
<dbReference type="EnsemblBacteria" id="ABL77983">
    <property type="protein sequence ID" value="ABL77983"/>
    <property type="gene ID" value="Tpen_0578"/>
</dbReference>
<dbReference type="GeneID" id="71811587"/>
<dbReference type="KEGG" id="tpe:Tpen_0578"/>
<dbReference type="eggNOG" id="arCOG04076">
    <property type="taxonomic scope" value="Archaea"/>
</dbReference>
<dbReference type="HOGENOM" id="CLU_1529305_0_0_2"/>
<dbReference type="UniPathway" id="UPA00241"/>
<dbReference type="Proteomes" id="UP000000641">
    <property type="component" value="Chromosome"/>
</dbReference>
<dbReference type="GO" id="GO:0005525">
    <property type="term" value="F:GTP binding"/>
    <property type="evidence" value="ECO:0007669"/>
    <property type="project" value="UniProtKB-UniRule"/>
</dbReference>
<dbReference type="GO" id="GO:0016301">
    <property type="term" value="F:kinase activity"/>
    <property type="evidence" value="ECO:0007669"/>
    <property type="project" value="UniProtKB-UniRule"/>
</dbReference>
<dbReference type="GO" id="GO:0015937">
    <property type="term" value="P:coenzyme A biosynthetic process"/>
    <property type="evidence" value="ECO:0007669"/>
    <property type="project" value="UniProtKB-UniRule"/>
</dbReference>
<dbReference type="HAMAP" id="MF_00590">
    <property type="entry name" value="Dephospho_CoA_kinase_GTP_dep"/>
    <property type="match status" value="1"/>
</dbReference>
<dbReference type="InterPro" id="IPR007164">
    <property type="entry name" value="GTP-dep_dephospho-CoA_kin"/>
</dbReference>
<dbReference type="PANTHER" id="PTHR40732:SF1">
    <property type="entry name" value="GTP-DEPENDENT DEPHOSPHO-COA KINASE"/>
    <property type="match status" value="1"/>
</dbReference>
<dbReference type="PANTHER" id="PTHR40732">
    <property type="entry name" value="UPF0218 PROTEIN TK1697"/>
    <property type="match status" value="1"/>
</dbReference>
<dbReference type="Pfam" id="PF04019">
    <property type="entry name" value="DUF359"/>
    <property type="match status" value="1"/>
</dbReference>
<name>DPCKG_THEPD</name>
<comment type="function">
    <text evidence="1">Catalyzes the GTP-dependent phosphorylation of the 3'-hydroxyl group of dephosphocoenzyme A to form coenzyme A (CoA).</text>
</comment>
<comment type="catalytic activity">
    <reaction evidence="1">
        <text>3'-dephospho-CoA + GTP = GDP + CoA + H(+)</text>
        <dbReference type="Rhea" id="RHEA:61156"/>
        <dbReference type="ChEBI" id="CHEBI:15378"/>
        <dbReference type="ChEBI" id="CHEBI:37565"/>
        <dbReference type="ChEBI" id="CHEBI:57287"/>
        <dbReference type="ChEBI" id="CHEBI:57328"/>
        <dbReference type="ChEBI" id="CHEBI:58189"/>
        <dbReference type="EC" id="2.7.1.237"/>
    </reaction>
</comment>
<comment type="pathway">
    <text evidence="1">Cofactor biosynthesis; coenzyme A biosynthesis.</text>
</comment>
<comment type="similarity">
    <text evidence="1">Belongs to the GTP-dependent DPCK family.</text>
</comment>